<accession>Q8XIJ2</accession>
<proteinExistence type="inferred from homology"/>
<reference key="1">
    <citation type="journal article" date="2002" name="Proc. Natl. Acad. Sci. U.S.A.">
        <title>Complete genome sequence of Clostridium perfringens, an anaerobic flesh-eater.</title>
        <authorList>
            <person name="Shimizu T."/>
            <person name="Ohtani K."/>
            <person name="Hirakawa H."/>
            <person name="Ohshima K."/>
            <person name="Yamashita A."/>
            <person name="Shiba T."/>
            <person name="Ogasawara N."/>
            <person name="Hattori M."/>
            <person name="Kuhara S."/>
            <person name="Hayashi H."/>
        </authorList>
    </citation>
    <scope>NUCLEOTIDE SEQUENCE [LARGE SCALE GENOMIC DNA]</scope>
    <source>
        <strain>13 / Type A</strain>
    </source>
</reference>
<protein>
    <recommendedName>
        <fullName evidence="1">GTPase Obg</fullName>
        <ecNumber evidence="1">3.6.5.-</ecNumber>
    </recommendedName>
    <alternativeName>
        <fullName evidence="1">GTP-binding protein Obg</fullName>
    </alternativeName>
</protein>
<name>OBG_CLOPE</name>
<dbReference type="EC" id="3.6.5.-" evidence="1"/>
<dbReference type="EMBL" id="BA000016">
    <property type="protein sequence ID" value="BAB81833.1"/>
    <property type="molecule type" value="Genomic_DNA"/>
</dbReference>
<dbReference type="SMR" id="Q8XIJ2"/>
<dbReference type="STRING" id="195102.gene:10491397"/>
<dbReference type="KEGG" id="cpe:CPE2127"/>
<dbReference type="HOGENOM" id="CLU_011747_2_1_9"/>
<dbReference type="Proteomes" id="UP000000818">
    <property type="component" value="Chromosome"/>
</dbReference>
<dbReference type="GO" id="GO:0005737">
    <property type="term" value="C:cytoplasm"/>
    <property type="evidence" value="ECO:0007669"/>
    <property type="project" value="UniProtKB-SubCell"/>
</dbReference>
<dbReference type="GO" id="GO:0005525">
    <property type="term" value="F:GTP binding"/>
    <property type="evidence" value="ECO:0007669"/>
    <property type="project" value="UniProtKB-UniRule"/>
</dbReference>
<dbReference type="GO" id="GO:0003924">
    <property type="term" value="F:GTPase activity"/>
    <property type="evidence" value="ECO:0007669"/>
    <property type="project" value="UniProtKB-UniRule"/>
</dbReference>
<dbReference type="GO" id="GO:0000287">
    <property type="term" value="F:magnesium ion binding"/>
    <property type="evidence" value="ECO:0007669"/>
    <property type="project" value="InterPro"/>
</dbReference>
<dbReference type="GO" id="GO:0042254">
    <property type="term" value="P:ribosome biogenesis"/>
    <property type="evidence" value="ECO:0007669"/>
    <property type="project" value="UniProtKB-UniRule"/>
</dbReference>
<dbReference type="CDD" id="cd01898">
    <property type="entry name" value="Obg"/>
    <property type="match status" value="1"/>
</dbReference>
<dbReference type="FunFam" id="2.70.210.12:FF:000001">
    <property type="entry name" value="GTPase Obg"/>
    <property type="match status" value="1"/>
</dbReference>
<dbReference type="Gene3D" id="3.30.300.350">
    <property type="entry name" value="GTP-binding protein OBG, C-terminal domain"/>
    <property type="match status" value="1"/>
</dbReference>
<dbReference type="Gene3D" id="2.70.210.12">
    <property type="entry name" value="GTP1/OBG domain"/>
    <property type="match status" value="1"/>
</dbReference>
<dbReference type="Gene3D" id="3.40.50.300">
    <property type="entry name" value="P-loop containing nucleotide triphosphate hydrolases"/>
    <property type="match status" value="1"/>
</dbReference>
<dbReference type="HAMAP" id="MF_01454">
    <property type="entry name" value="GTPase_Obg"/>
    <property type="match status" value="1"/>
</dbReference>
<dbReference type="InterPro" id="IPR031167">
    <property type="entry name" value="G_OBG"/>
</dbReference>
<dbReference type="InterPro" id="IPR006073">
    <property type="entry name" value="GTP-bd"/>
</dbReference>
<dbReference type="InterPro" id="IPR014100">
    <property type="entry name" value="GTP-bd_Obg/CgtA"/>
</dbReference>
<dbReference type="InterPro" id="IPR036346">
    <property type="entry name" value="GTP-bd_prot_GTP1/OBG_C_sf"/>
</dbReference>
<dbReference type="InterPro" id="IPR006074">
    <property type="entry name" value="GTP1-OBG_CS"/>
</dbReference>
<dbReference type="InterPro" id="IPR006169">
    <property type="entry name" value="GTP1_OBG_dom"/>
</dbReference>
<dbReference type="InterPro" id="IPR036726">
    <property type="entry name" value="GTP1_OBG_dom_sf"/>
</dbReference>
<dbReference type="InterPro" id="IPR045086">
    <property type="entry name" value="OBG_GTPase"/>
</dbReference>
<dbReference type="InterPro" id="IPR015349">
    <property type="entry name" value="OCT_dom"/>
</dbReference>
<dbReference type="InterPro" id="IPR027417">
    <property type="entry name" value="P-loop_NTPase"/>
</dbReference>
<dbReference type="InterPro" id="IPR005225">
    <property type="entry name" value="Small_GTP-bd"/>
</dbReference>
<dbReference type="NCBIfam" id="TIGR02729">
    <property type="entry name" value="Obg_CgtA"/>
    <property type="match status" value="1"/>
</dbReference>
<dbReference type="NCBIfam" id="TIGR03595">
    <property type="entry name" value="Obg_CgtA_exten"/>
    <property type="match status" value="1"/>
</dbReference>
<dbReference type="NCBIfam" id="NF008954">
    <property type="entry name" value="PRK12296.1"/>
    <property type="match status" value="1"/>
</dbReference>
<dbReference type="NCBIfam" id="NF008955">
    <property type="entry name" value="PRK12297.1"/>
    <property type="match status" value="1"/>
</dbReference>
<dbReference type="NCBIfam" id="NF008956">
    <property type="entry name" value="PRK12299.1"/>
    <property type="match status" value="1"/>
</dbReference>
<dbReference type="NCBIfam" id="TIGR00231">
    <property type="entry name" value="small_GTP"/>
    <property type="match status" value="1"/>
</dbReference>
<dbReference type="PANTHER" id="PTHR11702">
    <property type="entry name" value="DEVELOPMENTALLY REGULATED GTP-BINDING PROTEIN-RELATED"/>
    <property type="match status" value="1"/>
</dbReference>
<dbReference type="PANTHER" id="PTHR11702:SF31">
    <property type="entry name" value="MITOCHONDRIAL RIBOSOME-ASSOCIATED GTPASE 2"/>
    <property type="match status" value="1"/>
</dbReference>
<dbReference type="Pfam" id="PF09269">
    <property type="entry name" value="DUF1967"/>
    <property type="match status" value="1"/>
</dbReference>
<dbReference type="Pfam" id="PF01018">
    <property type="entry name" value="GTP1_OBG"/>
    <property type="match status" value="1"/>
</dbReference>
<dbReference type="Pfam" id="PF01926">
    <property type="entry name" value="MMR_HSR1"/>
    <property type="match status" value="1"/>
</dbReference>
<dbReference type="PRINTS" id="PR00326">
    <property type="entry name" value="GTP1OBG"/>
</dbReference>
<dbReference type="SUPFAM" id="SSF102741">
    <property type="entry name" value="Obg GTP-binding protein C-terminal domain"/>
    <property type="match status" value="1"/>
</dbReference>
<dbReference type="SUPFAM" id="SSF82051">
    <property type="entry name" value="Obg GTP-binding protein N-terminal domain"/>
    <property type="match status" value="1"/>
</dbReference>
<dbReference type="SUPFAM" id="SSF52540">
    <property type="entry name" value="P-loop containing nucleoside triphosphate hydrolases"/>
    <property type="match status" value="1"/>
</dbReference>
<dbReference type="PROSITE" id="PS51710">
    <property type="entry name" value="G_OBG"/>
    <property type="match status" value="1"/>
</dbReference>
<dbReference type="PROSITE" id="PS00905">
    <property type="entry name" value="GTP1_OBG"/>
    <property type="match status" value="1"/>
</dbReference>
<dbReference type="PROSITE" id="PS51883">
    <property type="entry name" value="OBG"/>
    <property type="match status" value="1"/>
</dbReference>
<dbReference type="PROSITE" id="PS51881">
    <property type="entry name" value="OCT"/>
    <property type="match status" value="1"/>
</dbReference>
<organism>
    <name type="scientific">Clostridium perfringens (strain 13 / Type A)</name>
    <dbReference type="NCBI Taxonomy" id="195102"/>
    <lineage>
        <taxon>Bacteria</taxon>
        <taxon>Bacillati</taxon>
        <taxon>Bacillota</taxon>
        <taxon>Clostridia</taxon>
        <taxon>Eubacteriales</taxon>
        <taxon>Clostridiaceae</taxon>
        <taxon>Clostridium</taxon>
    </lineage>
</organism>
<feature type="chain" id="PRO_0000385850" description="GTPase Obg">
    <location>
        <begin position="1"/>
        <end position="428"/>
    </location>
</feature>
<feature type="domain" description="Obg" evidence="3">
    <location>
        <begin position="1"/>
        <end position="158"/>
    </location>
</feature>
<feature type="domain" description="OBG-type G" evidence="1">
    <location>
        <begin position="159"/>
        <end position="331"/>
    </location>
</feature>
<feature type="domain" description="OCT" evidence="2">
    <location>
        <begin position="345"/>
        <end position="428"/>
    </location>
</feature>
<feature type="binding site" evidence="1">
    <location>
        <begin position="165"/>
        <end position="172"/>
    </location>
    <ligand>
        <name>GTP</name>
        <dbReference type="ChEBI" id="CHEBI:37565"/>
    </ligand>
</feature>
<feature type="binding site" evidence="1">
    <location>
        <position position="172"/>
    </location>
    <ligand>
        <name>Mg(2+)</name>
        <dbReference type="ChEBI" id="CHEBI:18420"/>
    </ligand>
</feature>
<feature type="binding site" evidence="1">
    <location>
        <begin position="190"/>
        <end position="194"/>
    </location>
    <ligand>
        <name>GTP</name>
        <dbReference type="ChEBI" id="CHEBI:37565"/>
    </ligand>
</feature>
<feature type="binding site" evidence="1">
    <location>
        <position position="192"/>
    </location>
    <ligand>
        <name>Mg(2+)</name>
        <dbReference type="ChEBI" id="CHEBI:18420"/>
    </ligand>
</feature>
<feature type="binding site" evidence="1">
    <location>
        <begin position="212"/>
        <end position="215"/>
    </location>
    <ligand>
        <name>GTP</name>
        <dbReference type="ChEBI" id="CHEBI:37565"/>
    </ligand>
</feature>
<feature type="binding site" evidence="1">
    <location>
        <begin position="282"/>
        <end position="285"/>
    </location>
    <ligand>
        <name>GTP</name>
        <dbReference type="ChEBI" id="CHEBI:37565"/>
    </ligand>
</feature>
<feature type="binding site" evidence="1">
    <location>
        <begin position="312"/>
        <end position="314"/>
    </location>
    <ligand>
        <name>GTP</name>
        <dbReference type="ChEBI" id="CHEBI:37565"/>
    </ligand>
</feature>
<comment type="function">
    <text evidence="1">An essential GTPase which binds GTP, GDP and possibly (p)ppGpp with moderate affinity, with high nucleotide exchange rates and a fairly low GTP hydrolysis rate. Plays a role in control of the cell cycle, stress response, ribosome biogenesis and in those bacteria that undergo differentiation, in morphogenesis control.</text>
</comment>
<comment type="cofactor">
    <cofactor evidence="1">
        <name>Mg(2+)</name>
        <dbReference type="ChEBI" id="CHEBI:18420"/>
    </cofactor>
</comment>
<comment type="subunit">
    <text evidence="1">Monomer.</text>
</comment>
<comment type="subcellular location">
    <subcellularLocation>
        <location evidence="1">Cytoplasm</location>
    </subcellularLocation>
</comment>
<comment type="similarity">
    <text evidence="1">Belongs to the TRAFAC class OBG-HflX-like GTPase superfamily. OBG GTPase family.</text>
</comment>
<evidence type="ECO:0000255" key="1">
    <source>
        <dbReference type="HAMAP-Rule" id="MF_01454"/>
    </source>
</evidence>
<evidence type="ECO:0000255" key="2">
    <source>
        <dbReference type="PROSITE-ProRule" id="PRU01229"/>
    </source>
</evidence>
<evidence type="ECO:0000255" key="3">
    <source>
        <dbReference type="PROSITE-ProRule" id="PRU01231"/>
    </source>
</evidence>
<sequence length="428" mass="47500">MFIDTAKIFVKSGDGGHGSVSFRREKYVPLGGPDGGDGGKGGDVTFVVDPGMTTLLDFKYKRKFVAGRGQDGQGSKCYGRDGENLTIKVPMGTIIRDVETNKVMADLSHRDDTYTICRGGKGGKGNCKFCTPTRQAPTFAEPGMPGEERWVALELKLLADVGLLGFPNVGKSTLLSVVTKAKPKIANYHFTTLKPNLGVVAVPGIEPFVMADVPGIIEGASEGVGLGLDFLRHIERTRLLIHVVDISGVEGRDAVEDFKRINEELKNYSVKLWDRPQIVVANKCDMLFDEEIFENFKAEVNKMGFDKVFKMSAATSQGVEEVIKEAARMLKDIPVTDLEIPEDERFIPEDKKFTYTINPIEEDGLKVYVVEGSFVDRLLLAVNVNDPDSLRYFHKVLNNKGIFHELREMGIEDGDMVRLNDFEFEYLL</sequence>
<gene>
    <name evidence="1" type="primary">obg</name>
    <name type="ordered locus">CPE2127</name>
</gene>
<keyword id="KW-0963">Cytoplasm</keyword>
<keyword id="KW-0342">GTP-binding</keyword>
<keyword id="KW-0378">Hydrolase</keyword>
<keyword id="KW-0460">Magnesium</keyword>
<keyword id="KW-0479">Metal-binding</keyword>
<keyword id="KW-0547">Nucleotide-binding</keyword>
<keyword id="KW-1185">Reference proteome</keyword>